<protein>
    <recommendedName>
        <fullName evidence="1">Molybdenum import ATP-binding protein ModC</fullName>
        <ecNumber evidence="1">7.3.2.5</ecNumber>
    </recommendedName>
</protein>
<feature type="chain" id="PRO_0000092554" description="Molybdenum import ATP-binding protein ModC">
    <location>
        <begin position="1"/>
        <end position="373"/>
    </location>
</feature>
<feature type="domain" description="ABC transporter" evidence="1">
    <location>
        <begin position="4"/>
        <end position="240"/>
    </location>
</feature>
<feature type="domain" description="Mop" evidence="2">
    <location>
        <begin position="299"/>
        <end position="369"/>
    </location>
</feature>
<feature type="binding site" evidence="1">
    <location>
        <begin position="38"/>
        <end position="45"/>
    </location>
    <ligand>
        <name>ATP</name>
        <dbReference type="ChEBI" id="CHEBI:30616"/>
    </ligand>
</feature>
<gene>
    <name evidence="1" type="primary">modC</name>
    <name type="ordered locus">RPA4715</name>
</gene>
<proteinExistence type="inferred from homology"/>
<sequence>MRALTPPTIRAAFRGQLGGFALDAAFTVPATGITGLFGPSGCGKSSVLRCLAGLQHLPGSSCEVGGEVWQDDTTFLKPHHRPIGYVFQEASLFQHLSVKANLLYGAPRESGKAHADAVEFDEVIELLGLAKLLARSPRNLSGGERQRVAIGRALLSQPKLLLMDEPLSALDRLTKDEILPFLERLHARLSLPVIYVSHDITEIERLADHLVLMQSGKVLAVGPLTELQSDPKLPLAIARDAAVNFDAEVESYDADYGLVRLQIDGGRLLVPSAPVATGEFRRVRIAASDVSLARELPQASSILNAIAARIVITSPVGANEMLVVLALGREGHGGRLLARLSRRSWDLLQLAEGVDVYAQIKGVALAPGRDGHV</sequence>
<organism>
    <name type="scientific">Rhodopseudomonas palustris (strain ATCC BAA-98 / CGA009)</name>
    <dbReference type="NCBI Taxonomy" id="258594"/>
    <lineage>
        <taxon>Bacteria</taxon>
        <taxon>Pseudomonadati</taxon>
        <taxon>Pseudomonadota</taxon>
        <taxon>Alphaproteobacteria</taxon>
        <taxon>Hyphomicrobiales</taxon>
        <taxon>Nitrobacteraceae</taxon>
        <taxon>Rhodopseudomonas</taxon>
    </lineage>
</organism>
<accession>Q6N0P7</accession>
<evidence type="ECO:0000255" key="1">
    <source>
        <dbReference type="HAMAP-Rule" id="MF_01705"/>
    </source>
</evidence>
<evidence type="ECO:0000255" key="2">
    <source>
        <dbReference type="PROSITE-ProRule" id="PRU01213"/>
    </source>
</evidence>
<keyword id="KW-0067">ATP-binding</keyword>
<keyword id="KW-0997">Cell inner membrane</keyword>
<keyword id="KW-1003">Cell membrane</keyword>
<keyword id="KW-0472">Membrane</keyword>
<keyword id="KW-0500">Molybdenum</keyword>
<keyword id="KW-0547">Nucleotide-binding</keyword>
<keyword id="KW-1278">Translocase</keyword>
<keyword id="KW-0813">Transport</keyword>
<dbReference type="EC" id="7.3.2.5" evidence="1"/>
<dbReference type="EMBL" id="BX572608">
    <property type="protein sequence ID" value="CAE30155.1"/>
    <property type="molecule type" value="Genomic_DNA"/>
</dbReference>
<dbReference type="RefSeq" id="WP_011160247.1">
    <property type="nucleotide sequence ID" value="NZ_CP116810.1"/>
</dbReference>
<dbReference type="SMR" id="Q6N0P7"/>
<dbReference type="STRING" id="258594.RPA4715"/>
<dbReference type="GeneID" id="66895872"/>
<dbReference type="eggNOG" id="COG4148">
    <property type="taxonomic scope" value="Bacteria"/>
</dbReference>
<dbReference type="HOGENOM" id="CLU_000604_1_1_5"/>
<dbReference type="PhylomeDB" id="Q6N0P7"/>
<dbReference type="GO" id="GO:0005886">
    <property type="term" value="C:plasma membrane"/>
    <property type="evidence" value="ECO:0007669"/>
    <property type="project" value="UniProtKB-SubCell"/>
</dbReference>
<dbReference type="GO" id="GO:0015412">
    <property type="term" value="F:ABC-type molybdate transporter activity"/>
    <property type="evidence" value="ECO:0007669"/>
    <property type="project" value="UniProtKB-EC"/>
</dbReference>
<dbReference type="GO" id="GO:0005524">
    <property type="term" value="F:ATP binding"/>
    <property type="evidence" value="ECO:0007669"/>
    <property type="project" value="UniProtKB-KW"/>
</dbReference>
<dbReference type="GO" id="GO:0016887">
    <property type="term" value="F:ATP hydrolysis activity"/>
    <property type="evidence" value="ECO:0007669"/>
    <property type="project" value="InterPro"/>
</dbReference>
<dbReference type="Gene3D" id="2.40.50.100">
    <property type="match status" value="1"/>
</dbReference>
<dbReference type="Gene3D" id="3.40.50.300">
    <property type="entry name" value="P-loop containing nucleotide triphosphate hydrolases"/>
    <property type="match status" value="1"/>
</dbReference>
<dbReference type="InterPro" id="IPR003593">
    <property type="entry name" value="AAA+_ATPase"/>
</dbReference>
<dbReference type="InterPro" id="IPR003439">
    <property type="entry name" value="ABC_transporter-like_ATP-bd"/>
</dbReference>
<dbReference type="InterPro" id="IPR017871">
    <property type="entry name" value="ABC_transporter-like_CS"/>
</dbReference>
<dbReference type="InterPro" id="IPR008995">
    <property type="entry name" value="Mo/tungstate-bd_C_term_dom"/>
</dbReference>
<dbReference type="InterPro" id="IPR011868">
    <property type="entry name" value="ModC_ABC_ATP-bd"/>
</dbReference>
<dbReference type="InterPro" id="IPR050334">
    <property type="entry name" value="Molybdenum_import_ModC"/>
</dbReference>
<dbReference type="InterPro" id="IPR004606">
    <property type="entry name" value="Mop_domain"/>
</dbReference>
<dbReference type="InterPro" id="IPR027417">
    <property type="entry name" value="P-loop_NTPase"/>
</dbReference>
<dbReference type="InterPro" id="IPR005116">
    <property type="entry name" value="Transp-assoc_OB_typ1"/>
</dbReference>
<dbReference type="NCBIfam" id="TIGR02142">
    <property type="entry name" value="modC_ABC"/>
    <property type="match status" value="1"/>
</dbReference>
<dbReference type="PANTHER" id="PTHR43514">
    <property type="entry name" value="ABC TRANSPORTER I FAMILY MEMBER 10"/>
    <property type="match status" value="1"/>
</dbReference>
<dbReference type="PANTHER" id="PTHR43514:SF10">
    <property type="entry name" value="MOLYBDENUM IMPORT ATP-BINDING PROTEIN MODC 2"/>
    <property type="match status" value="1"/>
</dbReference>
<dbReference type="Pfam" id="PF00005">
    <property type="entry name" value="ABC_tran"/>
    <property type="match status" value="1"/>
</dbReference>
<dbReference type="Pfam" id="PF03459">
    <property type="entry name" value="TOBE"/>
    <property type="match status" value="1"/>
</dbReference>
<dbReference type="SMART" id="SM00382">
    <property type="entry name" value="AAA"/>
    <property type="match status" value="1"/>
</dbReference>
<dbReference type="SUPFAM" id="SSF50331">
    <property type="entry name" value="MOP-like"/>
    <property type="match status" value="1"/>
</dbReference>
<dbReference type="SUPFAM" id="SSF52540">
    <property type="entry name" value="P-loop containing nucleoside triphosphate hydrolases"/>
    <property type="match status" value="1"/>
</dbReference>
<dbReference type="PROSITE" id="PS00211">
    <property type="entry name" value="ABC_TRANSPORTER_1"/>
    <property type="match status" value="1"/>
</dbReference>
<dbReference type="PROSITE" id="PS50893">
    <property type="entry name" value="ABC_TRANSPORTER_2"/>
    <property type="match status" value="1"/>
</dbReference>
<dbReference type="PROSITE" id="PS51241">
    <property type="entry name" value="MODC"/>
    <property type="match status" value="1"/>
</dbReference>
<dbReference type="PROSITE" id="PS51866">
    <property type="entry name" value="MOP"/>
    <property type="match status" value="1"/>
</dbReference>
<reference key="1">
    <citation type="journal article" date="2004" name="Nat. Biotechnol.">
        <title>Complete genome sequence of the metabolically versatile photosynthetic bacterium Rhodopseudomonas palustris.</title>
        <authorList>
            <person name="Larimer F.W."/>
            <person name="Chain P."/>
            <person name="Hauser L."/>
            <person name="Lamerdin J.E."/>
            <person name="Malfatti S."/>
            <person name="Do L."/>
            <person name="Land M.L."/>
            <person name="Pelletier D.A."/>
            <person name="Beatty J.T."/>
            <person name="Lang A.S."/>
            <person name="Tabita F.R."/>
            <person name="Gibson J.L."/>
            <person name="Hanson T.E."/>
            <person name="Bobst C."/>
            <person name="Torres y Torres J.L."/>
            <person name="Peres C."/>
            <person name="Harrison F.H."/>
            <person name="Gibson J."/>
            <person name="Harwood C.S."/>
        </authorList>
    </citation>
    <scope>NUCLEOTIDE SEQUENCE [LARGE SCALE GENOMIC DNA]</scope>
    <source>
        <strain>ATCC BAA-98 / CGA009</strain>
    </source>
</reference>
<comment type="function">
    <text evidence="1">Part of the ABC transporter complex ModABC involved in molybdenum import. Responsible for energy coupling to the transport system.</text>
</comment>
<comment type="catalytic activity">
    <reaction evidence="1">
        <text>molybdate(out) + ATP + H2O = molybdate(in) + ADP + phosphate + H(+)</text>
        <dbReference type="Rhea" id="RHEA:22020"/>
        <dbReference type="ChEBI" id="CHEBI:15377"/>
        <dbReference type="ChEBI" id="CHEBI:15378"/>
        <dbReference type="ChEBI" id="CHEBI:30616"/>
        <dbReference type="ChEBI" id="CHEBI:36264"/>
        <dbReference type="ChEBI" id="CHEBI:43474"/>
        <dbReference type="ChEBI" id="CHEBI:456216"/>
        <dbReference type="EC" id="7.3.2.5"/>
    </reaction>
</comment>
<comment type="subunit">
    <text evidence="1">The complex is composed of two ATP-binding proteins (ModC), two transmembrane proteins (ModB) and a solute-binding protein (ModA).</text>
</comment>
<comment type="subcellular location">
    <subcellularLocation>
        <location evidence="1">Cell inner membrane</location>
        <topology evidence="1">Peripheral membrane protein</topology>
    </subcellularLocation>
</comment>
<comment type="similarity">
    <text evidence="1">Belongs to the ABC transporter superfamily. Molybdate importer (TC 3.A.1.8) family.</text>
</comment>
<name>MODC_RHOPA</name>